<keyword id="KW-0056">Arginine metabolism</keyword>
<keyword id="KW-0520">NAD</keyword>
<keyword id="KW-0560">Oxidoreductase</keyword>
<dbReference type="EC" id="1.2.1.71" evidence="1"/>
<dbReference type="EMBL" id="CP001396">
    <property type="protein sequence ID" value="ACR65593.1"/>
    <property type="molecule type" value="Genomic_DNA"/>
</dbReference>
<dbReference type="RefSeq" id="WP_000177206.1">
    <property type="nucleotide sequence ID" value="NC_012759.1"/>
</dbReference>
<dbReference type="SMR" id="C4ZZA2"/>
<dbReference type="KEGG" id="ebw:BWG_1559"/>
<dbReference type="HOGENOM" id="CLU_005391_1_0_6"/>
<dbReference type="UniPathway" id="UPA00185">
    <property type="reaction ID" value="UER00282"/>
</dbReference>
<dbReference type="GO" id="GO:0004030">
    <property type="term" value="F:aldehyde dehydrogenase [NAD(P)+] activity"/>
    <property type="evidence" value="ECO:0007669"/>
    <property type="project" value="UniProtKB-ARBA"/>
</dbReference>
<dbReference type="GO" id="GO:0043824">
    <property type="term" value="F:succinylglutamate-semialdehyde dehydrogenase activity"/>
    <property type="evidence" value="ECO:0007669"/>
    <property type="project" value="UniProtKB-EC"/>
</dbReference>
<dbReference type="GO" id="GO:0019544">
    <property type="term" value="P:arginine catabolic process to glutamate"/>
    <property type="evidence" value="ECO:0007669"/>
    <property type="project" value="UniProtKB-UniRule"/>
</dbReference>
<dbReference type="GO" id="GO:0019545">
    <property type="term" value="P:arginine catabolic process to succinate"/>
    <property type="evidence" value="ECO:0007669"/>
    <property type="project" value="UniProtKB-UniRule"/>
</dbReference>
<dbReference type="CDD" id="cd07095">
    <property type="entry name" value="ALDH_SGSD_AstD"/>
    <property type="match status" value="1"/>
</dbReference>
<dbReference type="FunFam" id="3.40.309.10:FF:000013">
    <property type="entry name" value="N-succinylglutamate 5-semialdehyde dehydrogenase"/>
    <property type="match status" value="1"/>
</dbReference>
<dbReference type="FunFam" id="3.40.605.10:FF:000010">
    <property type="entry name" value="N-succinylglutamate 5-semialdehyde dehydrogenase"/>
    <property type="match status" value="1"/>
</dbReference>
<dbReference type="Gene3D" id="3.40.605.10">
    <property type="entry name" value="Aldehyde Dehydrogenase, Chain A, domain 1"/>
    <property type="match status" value="1"/>
</dbReference>
<dbReference type="Gene3D" id="3.40.309.10">
    <property type="entry name" value="Aldehyde Dehydrogenase, Chain A, domain 2"/>
    <property type="match status" value="1"/>
</dbReference>
<dbReference type="HAMAP" id="MF_01174">
    <property type="entry name" value="Aldedh_AstD"/>
    <property type="match status" value="1"/>
</dbReference>
<dbReference type="InterPro" id="IPR016161">
    <property type="entry name" value="Ald_DH/histidinol_DH"/>
</dbReference>
<dbReference type="InterPro" id="IPR016163">
    <property type="entry name" value="Ald_DH_C"/>
</dbReference>
<dbReference type="InterPro" id="IPR016160">
    <property type="entry name" value="Ald_DH_CS_CYS"/>
</dbReference>
<dbReference type="InterPro" id="IPR029510">
    <property type="entry name" value="Ald_DH_CS_GLU"/>
</dbReference>
<dbReference type="InterPro" id="IPR016162">
    <property type="entry name" value="Ald_DH_N"/>
</dbReference>
<dbReference type="InterPro" id="IPR015590">
    <property type="entry name" value="Aldehyde_DH_dom"/>
</dbReference>
<dbReference type="InterPro" id="IPR017649">
    <property type="entry name" value="SuccinylGlu_semiald_DH_AstD"/>
</dbReference>
<dbReference type="NCBIfam" id="TIGR03240">
    <property type="entry name" value="arg_catab_astD"/>
    <property type="match status" value="1"/>
</dbReference>
<dbReference type="NCBIfam" id="NF006992">
    <property type="entry name" value="PRK09457.1"/>
    <property type="match status" value="1"/>
</dbReference>
<dbReference type="PANTHER" id="PTHR11699">
    <property type="entry name" value="ALDEHYDE DEHYDROGENASE-RELATED"/>
    <property type="match status" value="1"/>
</dbReference>
<dbReference type="Pfam" id="PF00171">
    <property type="entry name" value="Aldedh"/>
    <property type="match status" value="1"/>
</dbReference>
<dbReference type="SUPFAM" id="SSF53720">
    <property type="entry name" value="ALDH-like"/>
    <property type="match status" value="1"/>
</dbReference>
<dbReference type="PROSITE" id="PS00070">
    <property type="entry name" value="ALDEHYDE_DEHYDR_CYS"/>
    <property type="match status" value="1"/>
</dbReference>
<dbReference type="PROSITE" id="PS00687">
    <property type="entry name" value="ALDEHYDE_DEHYDR_GLU"/>
    <property type="match status" value="1"/>
</dbReference>
<feature type="chain" id="PRO_1000213742" description="N-succinylglutamate 5-semialdehyde dehydrogenase">
    <location>
        <begin position="1"/>
        <end position="492"/>
    </location>
</feature>
<feature type="active site" evidence="1">
    <location>
        <position position="243"/>
    </location>
</feature>
<feature type="active site" evidence="1">
    <location>
        <position position="277"/>
    </location>
</feature>
<feature type="binding site" evidence="1">
    <location>
        <begin position="220"/>
        <end position="225"/>
    </location>
    <ligand>
        <name>NAD(+)</name>
        <dbReference type="ChEBI" id="CHEBI:57540"/>
    </ligand>
</feature>
<accession>C4ZZA2</accession>
<proteinExistence type="inferred from homology"/>
<organism>
    <name type="scientific">Escherichia coli (strain K12 / MC4100 / BW2952)</name>
    <dbReference type="NCBI Taxonomy" id="595496"/>
    <lineage>
        <taxon>Bacteria</taxon>
        <taxon>Pseudomonadati</taxon>
        <taxon>Pseudomonadota</taxon>
        <taxon>Gammaproteobacteria</taxon>
        <taxon>Enterobacterales</taxon>
        <taxon>Enterobacteriaceae</taxon>
        <taxon>Escherichia</taxon>
    </lineage>
</organism>
<name>ASTD_ECOBW</name>
<evidence type="ECO:0000255" key="1">
    <source>
        <dbReference type="HAMAP-Rule" id="MF_01174"/>
    </source>
</evidence>
<reference key="1">
    <citation type="journal article" date="2009" name="J. Bacteriol.">
        <title>Genomic sequencing reveals regulatory mutations and recombinational events in the widely used MC4100 lineage of Escherichia coli K-12.</title>
        <authorList>
            <person name="Ferenci T."/>
            <person name="Zhou Z."/>
            <person name="Betteridge T."/>
            <person name="Ren Y."/>
            <person name="Liu Y."/>
            <person name="Feng L."/>
            <person name="Reeves P.R."/>
            <person name="Wang L."/>
        </authorList>
    </citation>
    <scope>NUCLEOTIDE SEQUENCE [LARGE SCALE GENOMIC DNA]</scope>
    <source>
        <strain>K12 / MC4100 / BW2952</strain>
    </source>
</reference>
<protein>
    <recommendedName>
        <fullName evidence="1">N-succinylglutamate 5-semialdehyde dehydrogenase</fullName>
        <ecNumber evidence="1">1.2.1.71</ecNumber>
    </recommendedName>
    <alternativeName>
        <fullName evidence="1">Succinylglutamic semialdehyde dehydrogenase</fullName>
        <shortName evidence="1">SGSD</shortName>
    </alternativeName>
</protein>
<gene>
    <name evidence="1" type="primary">astD</name>
    <name type="ordered locus">BWG_1559</name>
</gene>
<comment type="function">
    <text evidence="1">Catalyzes the NAD-dependent reduction of succinylglutamate semialdehyde into succinylglutamate.</text>
</comment>
<comment type="catalytic activity">
    <reaction evidence="1">
        <text>N-succinyl-L-glutamate 5-semialdehyde + NAD(+) + H2O = N-succinyl-L-glutamate + NADH + 2 H(+)</text>
        <dbReference type="Rhea" id="RHEA:10812"/>
        <dbReference type="ChEBI" id="CHEBI:15377"/>
        <dbReference type="ChEBI" id="CHEBI:15378"/>
        <dbReference type="ChEBI" id="CHEBI:57540"/>
        <dbReference type="ChEBI" id="CHEBI:57945"/>
        <dbReference type="ChEBI" id="CHEBI:58520"/>
        <dbReference type="ChEBI" id="CHEBI:58763"/>
        <dbReference type="EC" id="1.2.1.71"/>
    </reaction>
</comment>
<comment type="pathway">
    <text evidence="1">Amino-acid degradation; L-arginine degradation via AST pathway; L-glutamate and succinate from L-arginine: step 4/5.</text>
</comment>
<comment type="similarity">
    <text evidence="1">Belongs to the aldehyde dehydrogenase family. AstD subfamily.</text>
</comment>
<sequence>MTLWINGDWITGQGASRVKRNPVSGEVLWQGNDADAAQVEQACRAARAAFPRWARLSFAERHAVVERFAALLESNKAELTAIIARETGKPRWEAATEVTAMINKIAISIKAYHVRTGEQRSEMPDGAASLRHRPHGVLAVFGPYNFPGHLPNGHIVPALLAGNTIIFKPSELTPWSGEAVMRLWQQAGLPPGVLNLVQGGRETGQALSALEDLDGLLFTGSANTGYQLHRQLSGQPEKILALEMGGNNPLIIDEVADIDAAVHLTIQSAFVTAGQRCTCARRLLLKSGAQGDAFLARLVAVSQRLTPGNWDDEPQPFIGGLISEQAAQQVVTAWQQLEAMGGRPLLAPRLLQAGTSLLTPGIIEMTGVAGVPDEEVFGPLLRVWRYDTFDEAIRMANNTRFGLSCGLVSPEREKFDQLLLEARAGIVNWNKPLTGAASTAPFGGIGASGNHRPSAWYAADYCAWPMASLESDSLTLPATLNPGLDFSDEVVR</sequence>